<name>DER_LACDB</name>
<accession>Q04AY6</accession>
<organism>
    <name type="scientific">Lactobacillus delbrueckii subsp. bulgaricus (strain ATCC BAA-365 / Lb-18)</name>
    <dbReference type="NCBI Taxonomy" id="321956"/>
    <lineage>
        <taxon>Bacteria</taxon>
        <taxon>Bacillati</taxon>
        <taxon>Bacillota</taxon>
        <taxon>Bacilli</taxon>
        <taxon>Lactobacillales</taxon>
        <taxon>Lactobacillaceae</taxon>
        <taxon>Lactobacillus</taxon>
    </lineage>
</organism>
<evidence type="ECO:0000255" key="1">
    <source>
        <dbReference type="HAMAP-Rule" id="MF_00195"/>
    </source>
</evidence>
<protein>
    <recommendedName>
        <fullName evidence="1">GTPase Der</fullName>
    </recommendedName>
    <alternativeName>
        <fullName evidence="1">GTP-binding protein EngA</fullName>
    </alternativeName>
</protein>
<sequence length="435" mass="48624">MPLPIVAIVGQPNVGKSTLFNRIINERVAIVEDRPGVTRDRNYARASWMGHQFSIIDTGGITWEDSTIDEEIRAQAEIAIEEADVIVMLADASQGVTSLDERIAHLLYRADKPVLLAVNKADNPEQRTDIYDFYSLGLGDPIPVSGSHGTGIGDLLDEVVKNFSPDAEKTEEGVISFSVIGRPNVGKSSIVNRLLGEERVIVANEEGTTRDAIDTPFVKDGTKFRVVDTAGIRRRGKVYEKTEKYSVMRAMSAMERSDVAILVLDASTGIREQDKHVAGYAHEAGLGMIIAVNKWDLPKKDSSSGKDFEAVIREEFSYLDYAPIVFVSAKTGKNIDQLPKMVKEVYENKNQRIQSSVLNDLLLEASRLVPAPMVKGKRLRVYYMTQVKTNPPTFVVFCNDPELMHFSYQRFLINQLRENFDFTGTPIKILPRKRK</sequence>
<proteinExistence type="inferred from homology"/>
<gene>
    <name evidence="1" type="primary">der</name>
    <name type="synonym">engA</name>
    <name type="ordered locus">LBUL_0776</name>
</gene>
<comment type="function">
    <text evidence="1">GTPase that plays an essential role in the late steps of ribosome biogenesis.</text>
</comment>
<comment type="subunit">
    <text evidence="1">Associates with the 50S ribosomal subunit.</text>
</comment>
<comment type="similarity">
    <text evidence="1">Belongs to the TRAFAC class TrmE-Era-EngA-EngB-Septin-like GTPase superfamily. EngA (Der) GTPase family.</text>
</comment>
<feature type="chain" id="PRO_1000011647" description="GTPase Der">
    <location>
        <begin position="1"/>
        <end position="435"/>
    </location>
</feature>
<feature type="domain" description="EngA-type G 1">
    <location>
        <begin position="4"/>
        <end position="167"/>
    </location>
</feature>
<feature type="domain" description="EngA-type G 2">
    <location>
        <begin position="175"/>
        <end position="350"/>
    </location>
</feature>
<feature type="domain" description="KH-like" evidence="1">
    <location>
        <begin position="351"/>
        <end position="435"/>
    </location>
</feature>
<feature type="binding site" evidence="1">
    <location>
        <begin position="10"/>
        <end position="17"/>
    </location>
    <ligand>
        <name>GTP</name>
        <dbReference type="ChEBI" id="CHEBI:37565"/>
        <label>1</label>
    </ligand>
</feature>
<feature type="binding site" evidence="1">
    <location>
        <begin position="57"/>
        <end position="61"/>
    </location>
    <ligand>
        <name>GTP</name>
        <dbReference type="ChEBI" id="CHEBI:37565"/>
        <label>1</label>
    </ligand>
</feature>
<feature type="binding site" evidence="1">
    <location>
        <begin position="119"/>
        <end position="122"/>
    </location>
    <ligand>
        <name>GTP</name>
        <dbReference type="ChEBI" id="CHEBI:37565"/>
        <label>1</label>
    </ligand>
</feature>
<feature type="binding site" evidence="1">
    <location>
        <begin position="181"/>
        <end position="188"/>
    </location>
    <ligand>
        <name>GTP</name>
        <dbReference type="ChEBI" id="CHEBI:37565"/>
        <label>2</label>
    </ligand>
</feature>
<feature type="binding site" evidence="1">
    <location>
        <begin position="228"/>
        <end position="232"/>
    </location>
    <ligand>
        <name>GTP</name>
        <dbReference type="ChEBI" id="CHEBI:37565"/>
        <label>2</label>
    </ligand>
</feature>
<feature type="binding site" evidence="1">
    <location>
        <begin position="293"/>
        <end position="296"/>
    </location>
    <ligand>
        <name>GTP</name>
        <dbReference type="ChEBI" id="CHEBI:37565"/>
        <label>2</label>
    </ligand>
</feature>
<reference key="1">
    <citation type="journal article" date="2006" name="Proc. Natl. Acad. Sci. U.S.A.">
        <title>Comparative genomics of the lactic acid bacteria.</title>
        <authorList>
            <person name="Makarova K.S."/>
            <person name="Slesarev A."/>
            <person name="Wolf Y.I."/>
            <person name="Sorokin A."/>
            <person name="Mirkin B."/>
            <person name="Koonin E.V."/>
            <person name="Pavlov A."/>
            <person name="Pavlova N."/>
            <person name="Karamychev V."/>
            <person name="Polouchine N."/>
            <person name="Shakhova V."/>
            <person name="Grigoriev I."/>
            <person name="Lou Y."/>
            <person name="Rohksar D."/>
            <person name="Lucas S."/>
            <person name="Huang K."/>
            <person name="Goodstein D.M."/>
            <person name="Hawkins T."/>
            <person name="Plengvidhya V."/>
            <person name="Welker D."/>
            <person name="Hughes J."/>
            <person name="Goh Y."/>
            <person name="Benson A."/>
            <person name="Baldwin K."/>
            <person name="Lee J.-H."/>
            <person name="Diaz-Muniz I."/>
            <person name="Dosti B."/>
            <person name="Smeianov V."/>
            <person name="Wechter W."/>
            <person name="Barabote R."/>
            <person name="Lorca G."/>
            <person name="Altermann E."/>
            <person name="Barrangou R."/>
            <person name="Ganesan B."/>
            <person name="Xie Y."/>
            <person name="Rawsthorne H."/>
            <person name="Tamir D."/>
            <person name="Parker C."/>
            <person name="Breidt F."/>
            <person name="Broadbent J.R."/>
            <person name="Hutkins R."/>
            <person name="O'Sullivan D."/>
            <person name="Steele J."/>
            <person name="Unlu G."/>
            <person name="Saier M.H. Jr."/>
            <person name="Klaenhammer T."/>
            <person name="Richardson P."/>
            <person name="Kozyavkin S."/>
            <person name="Weimer B.C."/>
            <person name="Mills D.A."/>
        </authorList>
    </citation>
    <scope>NUCLEOTIDE SEQUENCE [LARGE SCALE GENOMIC DNA]</scope>
    <source>
        <strain>ATCC BAA-365 / Lb-18</strain>
    </source>
</reference>
<dbReference type="EMBL" id="CP000412">
    <property type="protein sequence ID" value="ABJ58386.1"/>
    <property type="molecule type" value="Genomic_DNA"/>
</dbReference>
<dbReference type="RefSeq" id="WP_003624291.1">
    <property type="nucleotide sequence ID" value="NC_008529.1"/>
</dbReference>
<dbReference type="SMR" id="Q04AY6"/>
<dbReference type="KEGG" id="lbu:LBUL_0776"/>
<dbReference type="HOGENOM" id="CLU_016077_6_2_9"/>
<dbReference type="BioCyc" id="LDEL321956:LBUL_RS03705-MONOMER"/>
<dbReference type="GO" id="GO:0005525">
    <property type="term" value="F:GTP binding"/>
    <property type="evidence" value="ECO:0007669"/>
    <property type="project" value="UniProtKB-UniRule"/>
</dbReference>
<dbReference type="GO" id="GO:0043022">
    <property type="term" value="F:ribosome binding"/>
    <property type="evidence" value="ECO:0007669"/>
    <property type="project" value="TreeGrafter"/>
</dbReference>
<dbReference type="GO" id="GO:0042254">
    <property type="term" value="P:ribosome biogenesis"/>
    <property type="evidence" value="ECO:0007669"/>
    <property type="project" value="UniProtKB-KW"/>
</dbReference>
<dbReference type="CDD" id="cd01894">
    <property type="entry name" value="EngA1"/>
    <property type="match status" value="1"/>
</dbReference>
<dbReference type="CDD" id="cd01895">
    <property type="entry name" value="EngA2"/>
    <property type="match status" value="1"/>
</dbReference>
<dbReference type="FunFam" id="3.30.300.20:FF:000004">
    <property type="entry name" value="GTPase Der"/>
    <property type="match status" value="1"/>
</dbReference>
<dbReference type="FunFam" id="3.40.50.300:FF:000040">
    <property type="entry name" value="GTPase Der"/>
    <property type="match status" value="1"/>
</dbReference>
<dbReference type="FunFam" id="3.40.50.300:FF:000057">
    <property type="entry name" value="GTPase Der"/>
    <property type="match status" value="1"/>
</dbReference>
<dbReference type="Gene3D" id="3.30.300.20">
    <property type="match status" value="1"/>
</dbReference>
<dbReference type="Gene3D" id="3.40.50.300">
    <property type="entry name" value="P-loop containing nucleotide triphosphate hydrolases"/>
    <property type="match status" value="2"/>
</dbReference>
<dbReference type="HAMAP" id="MF_00195">
    <property type="entry name" value="GTPase_Der"/>
    <property type="match status" value="1"/>
</dbReference>
<dbReference type="InterPro" id="IPR031166">
    <property type="entry name" value="G_ENGA"/>
</dbReference>
<dbReference type="InterPro" id="IPR006073">
    <property type="entry name" value="GTP-bd"/>
</dbReference>
<dbReference type="InterPro" id="IPR016484">
    <property type="entry name" value="GTPase_Der"/>
</dbReference>
<dbReference type="InterPro" id="IPR032859">
    <property type="entry name" value="KH_dom-like"/>
</dbReference>
<dbReference type="InterPro" id="IPR015946">
    <property type="entry name" value="KH_dom-like_a/b"/>
</dbReference>
<dbReference type="InterPro" id="IPR027417">
    <property type="entry name" value="P-loop_NTPase"/>
</dbReference>
<dbReference type="InterPro" id="IPR005225">
    <property type="entry name" value="Small_GTP-bd"/>
</dbReference>
<dbReference type="NCBIfam" id="TIGR03594">
    <property type="entry name" value="GTPase_EngA"/>
    <property type="match status" value="1"/>
</dbReference>
<dbReference type="NCBIfam" id="TIGR00231">
    <property type="entry name" value="small_GTP"/>
    <property type="match status" value="2"/>
</dbReference>
<dbReference type="PANTHER" id="PTHR43834">
    <property type="entry name" value="GTPASE DER"/>
    <property type="match status" value="1"/>
</dbReference>
<dbReference type="PANTHER" id="PTHR43834:SF6">
    <property type="entry name" value="GTPASE DER"/>
    <property type="match status" value="1"/>
</dbReference>
<dbReference type="Pfam" id="PF14714">
    <property type="entry name" value="KH_dom-like"/>
    <property type="match status" value="1"/>
</dbReference>
<dbReference type="Pfam" id="PF01926">
    <property type="entry name" value="MMR_HSR1"/>
    <property type="match status" value="2"/>
</dbReference>
<dbReference type="PIRSF" id="PIRSF006485">
    <property type="entry name" value="GTP-binding_EngA"/>
    <property type="match status" value="1"/>
</dbReference>
<dbReference type="SUPFAM" id="SSF52540">
    <property type="entry name" value="P-loop containing nucleoside triphosphate hydrolases"/>
    <property type="match status" value="2"/>
</dbReference>
<dbReference type="PROSITE" id="PS51712">
    <property type="entry name" value="G_ENGA"/>
    <property type="match status" value="2"/>
</dbReference>
<keyword id="KW-0342">GTP-binding</keyword>
<keyword id="KW-0547">Nucleotide-binding</keyword>
<keyword id="KW-0677">Repeat</keyword>
<keyword id="KW-0690">Ribosome biogenesis</keyword>